<sequence>MGKLTILVLVAAVLLSTQVMVQGDGDQPAYRNAAPRDDNPGGAIGKFMNVLRRSGCPWDPWCG</sequence>
<proteinExistence type="evidence at protein level"/>
<feature type="signal peptide" evidence="6">
    <location>
        <begin position="1"/>
        <end position="23"/>
    </location>
</feature>
<feature type="propeptide" id="PRO_0000035068" evidence="12">
    <location>
        <begin position="24"/>
        <end position="54"/>
    </location>
</feature>
<feature type="peptide" id="PRO_0000035069" description="Contryphan-P" evidence="7">
    <location>
        <begin position="55"/>
        <end position="62"/>
    </location>
</feature>
<feature type="modified residue" description="4-hydroxyproline" evidence="12">
    <location>
        <position position="57"/>
    </location>
</feature>
<feature type="modified residue" description="D-tryptophan" evidence="12">
    <location>
        <position position="58"/>
    </location>
</feature>
<feature type="modified residue" description="Cysteine amide" evidence="12">
    <location>
        <position position="62"/>
    </location>
</feature>
<feature type="disulfide bond" evidence="3">
    <location>
        <begin position="56"/>
        <end position="62"/>
    </location>
</feature>
<name>COWW_CONPU</name>
<dbReference type="SMR" id="P58784"/>
<dbReference type="ConoServer" id="1312">
    <property type="toxin name" value="Contryphan-P precursor"/>
</dbReference>
<dbReference type="GO" id="GO:0005576">
    <property type="term" value="C:extracellular region"/>
    <property type="evidence" value="ECO:0007669"/>
    <property type="project" value="UniProtKB-SubCell"/>
</dbReference>
<dbReference type="GO" id="GO:0008200">
    <property type="term" value="F:ion channel inhibitor activity"/>
    <property type="evidence" value="ECO:0007669"/>
    <property type="project" value="InterPro"/>
</dbReference>
<dbReference type="GO" id="GO:0090729">
    <property type="term" value="F:toxin activity"/>
    <property type="evidence" value="ECO:0007669"/>
    <property type="project" value="UniProtKB-KW"/>
</dbReference>
<dbReference type="InterPro" id="IPR004214">
    <property type="entry name" value="Conotoxin"/>
</dbReference>
<dbReference type="InterPro" id="IPR011062">
    <property type="entry name" value="Contryphan_CS"/>
</dbReference>
<dbReference type="Pfam" id="PF02950">
    <property type="entry name" value="Conotoxin"/>
    <property type="match status" value="1"/>
</dbReference>
<dbReference type="PROSITE" id="PS60027">
    <property type="entry name" value="CONTRYPHAN"/>
    <property type="match status" value="1"/>
</dbReference>
<keyword id="KW-0027">Amidation</keyword>
<keyword id="KW-0208">D-amino acid</keyword>
<keyword id="KW-1015">Disulfide bond</keyword>
<keyword id="KW-0379">Hydroxylation</keyword>
<keyword id="KW-0872">Ion channel impairing toxin</keyword>
<keyword id="KW-0528">Neurotoxin</keyword>
<keyword id="KW-0964">Secreted</keyword>
<keyword id="KW-0732">Signal</keyword>
<keyword id="KW-0800">Toxin</keyword>
<protein>
    <recommendedName>
        <fullName evidence="8 9">Contryphan-P</fullName>
    </recommendedName>
    <alternativeName>
        <fullName evidence="9">Trp-Contryphan-P</fullName>
    </alternativeName>
</protein>
<accession>P58784</accession>
<evidence type="ECO:0000250" key="1">
    <source>
        <dbReference type="UniProtKB" id="P0C248"/>
    </source>
</evidence>
<evidence type="ECO:0000250" key="2">
    <source>
        <dbReference type="UniProtKB" id="P0C250"/>
    </source>
</evidence>
<evidence type="ECO:0000250" key="3">
    <source>
        <dbReference type="UniProtKB" id="P58786"/>
    </source>
</evidence>
<evidence type="ECO:0000250" key="4">
    <source>
        <dbReference type="UniProtKB" id="P62903"/>
    </source>
</evidence>
<evidence type="ECO:0000250" key="5">
    <source>
        <dbReference type="UniProtKB" id="P83047"/>
    </source>
</evidence>
<evidence type="ECO:0000255" key="6"/>
<evidence type="ECO:0000269" key="7">
    <source>
    </source>
</evidence>
<evidence type="ECO:0000303" key="8">
    <source>
    </source>
</evidence>
<evidence type="ECO:0000303" key="9">
    <source>
    </source>
</evidence>
<evidence type="ECO:0000305" key="10"/>
<evidence type="ECO:0000305" key="11">
    <source>
    </source>
</evidence>
<evidence type="ECO:0000305" key="12">
    <source>
    </source>
</evidence>
<evidence type="ECO:0000305" key="13">
    <source>
    </source>
</evidence>
<comment type="function">
    <text evidence="1 2 4 5">Its target is unknown, but this toxin may modulate voltage-activated calcium channels (Cav) or calcium-dependent potassium channels (KCa).</text>
</comment>
<comment type="subcellular location">
    <subcellularLocation>
        <location evidence="7">Secreted</location>
    </subcellularLocation>
</comment>
<comment type="tissue specificity">
    <text evidence="13">Expressed by the venom duct.</text>
</comment>
<comment type="domain">
    <text evidence="10">The cysteine framework is C-C.</text>
</comment>
<comment type="mass spectrometry">
    <text>Monoisotopic mass.</text>
</comment>
<comment type="miscellaneous">
    <text evidence="11">Exists in two forms, due to cis-trans isomerization at 56-Cys-hydroxyPro-57.</text>
</comment>
<comment type="similarity">
    <text evidence="10">Belongs to the O2 superfamily. Contryphan family.</text>
</comment>
<reference key="1">
    <citation type="journal article" date="1998" name="J. Pept. Res.">
        <title>The contryphans, a D-tryptophan-containing family of Conus peptides: interconversion between conformers.</title>
        <authorList>
            <person name="Jacobsen R.B."/>
            <person name="Jimenez E.C."/>
            <person name="Grilley M."/>
            <person name="Watkins M."/>
            <person name="Hillyard D.R."/>
            <person name="Cruz L.J."/>
            <person name="Olivera B.M."/>
        </authorList>
    </citation>
    <scope>NUCLEOTIDE SEQUENCE [MRNA]</scope>
    <source>
        <strain>Gulf of California</strain>
        <tissue>Venom duct</tissue>
    </source>
</reference>
<reference key="2">
    <citation type="journal article" date="2000" name="Biochemistry">
        <title>Structures of the contryphan family of cyclic peptides. Role of electrostatic interactions in cis-trans isomerism.</title>
        <authorList>
            <person name="Pallaghy P.K."/>
            <person name="He W."/>
            <person name="Jimenez E.C."/>
            <person name="Olivera B.M."/>
            <person name="Norton R.S."/>
        </authorList>
    </citation>
    <scope>CIS-TRANS ISOMERIZATION</scope>
</reference>
<reference key="3">
    <citation type="journal article" date="2017" name="J. Proteome Res.">
        <title>Contryphan genes and mature peptides in the venom of nine cone snail species by transcriptomic and mass spectrometric analysis.</title>
        <authorList>
            <person name="Vijayasarathy M."/>
            <person name="Basheer S.M."/>
            <person name="Franklin J.B."/>
            <person name="Balaram P."/>
        </authorList>
    </citation>
    <scope>MASS SPECTROMETRY</scope>
    <scope>HYDROXYLATION AT PRO-57</scope>
    <scope>D-AMINO ACID AT TRP-58</scope>
    <scope>AMIDATION AT CYS-62</scope>
    <scope>SUBCELLULAR LOCATION</scope>
    <source>
        <tissue>Venom</tissue>
    </source>
</reference>
<organism>
    <name type="scientific">Conus purpurascens</name>
    <name type="common">Purple cone</name>
    <dbReference type="NCBI Taxonomy" id="41690"/>
    <lineage>
        <taxon>Eukaryota</taxon>
        <taxon>Metazoa</taxon>
        <taxon>Spiralia</taxon>
        <taxon>Lophotrochozoa</taxon>
        <taxon>Mollusca</taxon>
        <taxon>Gastropoda</taxon>
        <taxon>Caenogastropoda</taxon>
        <taxon>Neogastropoda</taxon>
        <taxon>Conoidea</taxon>
        <taxon>Conidae</taxon>
        <taxon>Conus</taxon>
        <taxon>Chelyconus</taxon>
    </lineage>
</organism>